<feature type="chain" id="PRO_0000216977" description="UPF0297 protein SACOL1672">
    <location>
        <begin position="1"/>
        <end position="86"/>
    </location>
</feature>
<comment type="similarity">
    <text evidence="1">Belongs to the UPF0297 family.</text>
</comment>
<evidence type="ECO:0000255" key="1">
    <source>
        <dbReference type="HAMAP-Rule" id="MF_01507"/>
    </source>
</evidence>
<dbReference type="EMBL" id="CP000046">
    <property type="protein sequence ID" value="AAW36779.1"/>
    <property type="molecule type" value="Genomic_DNA"/>
</dbReference>
<dbReference type="RefSeq" id="WP_000426912.1">
    <property type="nucleotide sequence ID" value="NZ_JBGOFO010000003.1"/>
</dbReference>
<dbReference type="SMR" id="Q5HFE5"/>
<dbReference type="KEGG" id="sac:SACOL1672"/>
<dbReference type="HOGENOM" id="CLU_162466_0_0_9"/>
<dbReference type="Proteomes" id="UP000000530">
    <property type="component" value="Chromosome"/>
</dbReference>
<dbReference type="HAMAP" id="MF_01507">
    <property type="entry name" value="UPF0297"/>
    <property type="match status" value="1"/>
</dbReference>
<dbReference type="InterPro" id="IPR009309">
    <property type="entry name" value="IreB"/>
</dbReference>
<dbReference type="NCBIfam" id="NF003997">
    <property type="entry name" value="PRK05473.1"/>
    <property type="match status" value="1"/>
</dbReference>
<dbReference type="PANTHER" id="PTHR40067">
    <property type="entry name" value="UPF0297 PROTEIN YRZL"/>
    <property type="match status" value="1"/>
</dbReference>
<dbReference type="PANTHER" id="PTHR40067:SF1">
    <property type="entry name" value="UPF0297 PROTEIN YRZL"/>
    <property type="match status" value="1"/>
</dbReference>
<dbReference type="Pfam" id="PF06135">
    <property type="entry name" value="IreB"/>
    <property type="match status" value="1"/>
</dbReference>
<dbReference type="PIRSF" id="PIRSF037258">
    <property type="entry name" value="DUF965_bac"/>
    <property type="match status" value="1"/>
</dbReference>
<accession>Q5HFE5</accession>
<proteinExistence type="inferred from homology"/>
<organism>
    <name type="scientific">Staphylococcus aureus (strain COL)</name>
    <dbReference type="NCBI Taxonomy" id="93062"/>
    <lineage>
        <taxon>Bacteria</taxon>
        <taxon>Bacillati</taxon>
        <taxon>Bacillota</taxon>
        <taxon>Bacilli</taxon>
        <taxon>Bacillales</taxon>
        <taxon>Staphylococcaceae</taxon>
        <taxon>Staphylococcus</taxon>
    </lineage>
</organism>
<name>Y1672_STAAC</name>
<gene>
    <name type="ordered locus">SACOL1672</name>
</gene>
<protein>
    <recommendedName>
        <fullName evidence="1">UPF0297 protein SACOL1672</fullName>
    </recommendedName>
</protein>
<reference key="1">
    <citation type="journal article" date="2005" name="J. Bacteriol.">
        <title>Insights on evolution of virulence and resistance from the complete genome analysis of an early methicillin-resistant Staphylococcus aureus strain and a biofilm-producing methicillin-resistant Staphylococcus epidermidis strain.</title>
        <authorList>
            <person name="Gill S.R."/>
            <person name="Fouts D.E."/>
            <person name="Archer G.L."/>
            <person name="Mongodin E.F."/>
            <person name="DeBoy R.T."/>
            <person name="Ravel J."/>
            <person name="Paulsen I.T."/>
            <person name="Kolonay J.F."/>
            <person name="Brinkac L.M."/>
            <person name="Beanan M.J."/>
            <person name="Dodson R.J."/>
            <person name="Daugherty S.C."/>
            <person name="Madupu R."/>
            <person name="Angiuoli S.V."/>
            <person name="Durkin A.S."/>
            <person name="Haft D.H."/>
            <person name="Vamathevan J.J."/>
            <person name="Khouri H."/>
            <person name="Utterback T.R."/>
            <person name="Lee C."/>
            <person name="Dimitrov G."/>
            <person name="Jiang L."/>
            <person name="Qin H."/>
            <person name="Weidman J."/>
            <person name="Tran K."/>
            <person name="Kang K.H."/>
            <person name="Hance I.R."/>
            <person name="Nelson K.E."/>
            <person name="Fraser C.M."/>
        </authorList>
    </citation>
    <scope>NUCLEOTIDE SEQUENCE [LARGE SCALE GENOMIC DNA]</scope>
    <source>
        <strain>COL</strain>
    </source>
</reference>
<sequence>MENFDKTMKFDYEELPTQDVRDVLNNVYRTLDERGYNAVNQIVGYLLSGDPAYIPRQNEARNQIRHIDRDVIMEELVSYYLKEQNK</sequence>